<proteinExistence type="inferred from homology"/>
<organism>
    <name type="scientific">Streptomyces avermitilis (strain ATCC 31267 / DSM 46492 / JCM 5070 / NBRC 14893 / NCIMB 12804 / NRRL 8165 / MA-4680)</name>
    <dbReference type="NCBI Taxonomy" id="227882"/>
    <lineage>
        <taxon>Bacteria</taxon>
        <taxon>Bacillati</taxon>
        <taxon>Actinomycetota</taxon>
        <taxon>Actinomycetes</taxon>
        <taxon>Kitasatosporales</taxon>
        <taxon>Streptomycetaceae</taxon>
        <taxon>Streptomyces</taxon>
    </lineage>
</organism>
<protein>
    <recommendedName>
        <fullName evidence="1">Acetate kinase</fullName>
        <ecNumber evidence="1">2.7.2.1</ecNumber>
    </recommendedName>
    <alternativeName>
        <fullName evidence="1">Acetokinase</fullName>
    </alternativeName>
</protein>
<feature type="chain" id="PRO_0000107620" description="Acetate kinase">
    <location>
        <begin position="1"/>
        <end position="405"/>
    </location>
</feature>
<feature type="active site" description="Proton donor/acceptor" evidence="1">
    <location>
        <position position="150"/>
    </location>
</feature>
<feature type="binding site" evidence="1">
    <location>
        <position position="10"/>
    </location>
    <ligand>
        <name>Mg(2+)</name>
        <dbReference type="ChEBI" id="CHEBI:18420"/>
    </ligand>
</feature>
<feature type="binding site" evidence="1">
    <location>
        <position position="17"/>
    </location>
    <ligand>
        <name>ATP</name>
        <dbReference type="ChEBI" id="CHEBI:30616"/>
    </ligand>
</feature>
<feature type="binding site" evidence="1">
    <location>
        <position position="93"/>
    </location>
    <ligand>
        <name>substrate</name>
    </ligand>
</feature>
<feature type="binding site" evidence="1">
    <location>
        <begin position="210"/>
        <end position="214"/>
    </location>
    <ligand>
        <name>ATP</name>
        <dbReference type="ChEBI" id="CHEBI:30616"/>
    </ligand>
</feature>
<feature type="binding site" evidence="1">
    <location>
        <begin position="284"/>
        <end position="286"/>
    </location>
    <ligand>
        <name>ATP</name>
        <dbReference type="ChEBI" id="CHEBI:30616"/>
    </ligand>
</feature>
<feature type="binding site" evidence="1">
    <location>
        <begin position="332"/>
        <end position="336"/>
    </location>
    <ligand>
        <name>ATP</name>
        <dbReference type="ChEBI" id="CHEBI:30616"/>
    </ligand>
</feature>
<feature type="binding site" evidence="1">
    <location>
        <position position="386"/>
    </location>
    <ligand>
        <name>Mg(2+)</name>
        <dbReference type="ChEBI" id="CHEBI:18420"/>
    </ligand>
</feature>
<feature type="site" description="Transition state stabilizer" evidence="1">
    <location>
        <position position="182"/>
    </location>
</feature>
<feature type="site" description="Transition state stabilizer" evidence="1">
    <location>
        <position position="243"/>
    </location>
</feature>
<name>ACKA_STRAW</name>
<reference key="1">
    <citation type="journal article" date="2001" name="Proc. Natl. Acad. Sci. U.S.A.">
        <title>Genome sequence of an industrial microorganism Streptomyces avermitilis: deducing the ability of producing secondary metabolites.</title>
        <authorList>
            <person name="Omura S."/>
            <person name="Ikeda H."/>
            <person name="Ishikawa J."/>
            <person name="Hanamoto A."/>
            <person name="Takahashi C."/>
            <person name="Shinose M."/>
            <person name="Takahashi Y."/>
            <person name="Horikawa H."/>
            <person name="Nakazawa H."/>
            <person name="Osonoe T."/>
            <person name="Kikuchi H."/>
            <person name="Shiba T."/>
            <person name="Sakaki Y."/>
            <person name="Hattori M."/>
        </authorList>
    </citation>
    <scope>NUCLEOTIDE SEQUENCE [LARGE SCALE GENOMIC DNA]</scope>
    <source>
        <strain>ATCC 31267 / DSM 46492 / JCM 5070 / NBRC 14893 / NCIMB 12804 / NRRL 8165 / MA-4680</strain>
    </source>
</reference>
<reference key="2">
    <citation type="journal article" date="2003" name="Nat. Biotechnol.">
        <title>Complete genome sequence and comparative analysis of the industrial microorganism Streptomyces avermitilis.</title>
        <authorList>
            <person name="Ikeda H."/>
            <person name="Ishikawa J."/>
            <person name="Hanamoto A."/>
            <person name="Shinose M."/>
            <person name="Kikuchi H."/>
            <person name="Shiba T."/>
            <person name="Sakaki Y."/>
            <person name="Hattori M."/>
            <person name="Omura S."/>
        </authorList>
    </citation>
    <scope>NUCLEOTIDE SEQUENCE [LARGE SCALE GENOMIC DNA]</scope>
    <source>
        <strain>ATCC 31267 / DSM 46492 / JCM 5070 / NBRC 14893 / NCIMB 12804 / NRRL 8165 / MA-4680</strain>
    </source>
</reference>
<accession>Q82JD1</accession>
<dbReference type="EC" id="2.7.2.1" evidence="1"/>
<dbReference type="EMBL" id="BA000030">
    <property type="protein sequence ID" value="BAC70535.1"/>
    <property type="molecule type" value="Genomic_DNA"/>
</dbReference>
<dbReference type="RefSeq" id="WP_010984256.1">
    <property type="nucleotide sequence ID" value="NZ_JZJK01000041.1"/>
</dbReference>
<dbReference type="SMR" id="Q82JD1"/>
<dbReference type="GeneID" id="41539911"/>
<dbReference type="KEGG" id="sma:SAVERM_2824"/>
<dbReference type="eggNOG" id="COG0282">
    <property type="taxonomic scope" value="Bacteria"/>
</dbReference>
<dbReference type="HOGENOM" id="CLU_020352_0_1_11"/>
<dbReference type="OrthoDB" id="9802453at2"/>
<dbReference type="UniPathway" id="UPA00340">
    <property type="reaction ID" value="UER00458"/>
</dbReference>
<dbReference type="Proteomes" id="UP000000428">
    <property type="component" value="Chromosome"/>
</dbReference>
<dbReference type="GO" id="GO:0005737">
    <property type="term" value="C:cytoplasm"/>
    <property type="evidence" value="ECO:0007669"/>
    <property type="project" value="UniProtKB-SubCell"/>
</dbReference>
<dbReference type="GO" id="GO:0008776">
    <property type="term" value="F:acetate kinase activity"/>
    <property type="evidence" value="ECO:0007669"/>
    <property type="project" value="UniProtKB-UniRule"/>
</dbReference>
<dbReference type="GO" id="GO:0005524">
    <property type="term" value="F:ATP binding"/>
    <property type="evidence" value="ECO:0007669"/>
    <property type="project" value="UniProtKB-KW"/>
</dbReference>
<dbReference type="GO" id="GO:0000287">
    <property type="term" value="F:magnesium ion binding"/>
    <property type="evidence" value="ECO:0007669"/>
    <property type="project" value="UniProtKB-UniRule"/>
</dbReference>
<dbReference type="GO" id="GO:0006083">
    <property type="term" value="P:acetate metabolic process"/>
    <property type="evidence" value="ECO:0007669"/>
    <property type="project" value="TreeGrafter"/>
</dbReference>
<dbReference type="GO" id="GO:0006085">
    <property type="term" value="P:acetyl-CoA biosynthetic process"/>
    <property type="evidence" value="ECO:0007669"/>
    <property type="project" value="UniProtKB-UniRule"/>
</dbReference>
<dbReference type="CDD" id="cd24010">
    <property type="entry name" value="ASKHA_NBD_AcK_PK"/>
    <property type="match status" value="1"/>
</dbReference>
<dbReference type="Gene3D" id="3.30.420.40">
    <property type="match status" value="2"/>
</dbReference>
<dbReference type="HAMAP" id="MF_00020">
    <property type="entry name" value="Acetate_kinase"/>
    <property type="match status" value="1"/>
</dbReference>
<dbReference type="InterPro" id="IPR004372">
    <property type="entry name" value="Ac/propionate_kinase"/>
</dbReference>
<dbReference type="InterPro" id="IPR000890">
    <property type="entry name" value="Aliphatic_acid_kin_short-chain"/>
</dbReference>
<dbReference type="InterPro" id="IPR023865">
    <property type="entry name" value="Aliphatic_acid_kinase_CS"/>
</dbReference>
<dbReference type="InterPro" id="IPR043129">
    <property type="entry name" value="ATPase_NBD"/>
</dbReference>
<dbReference type="NCBIfam" id="TIGR00016">
    <property type="entry name" value="ackA"/>
    <property type="match status" value="1"/>
</dbReference>
<dbReference type="PANTHER" id="PTHR21060">
    <property type="entry name" value="ACETATE KINASE"/>
    <property type="match status" value="1"/>
</dbReference>
<dbReference type="PANTHER" id="PTHR21060:SF15">
    <property type="entry name" value="ACETATE KINASE-RELATED"/>
    <property type="match status" value="1"/>
</dbReference>
<dbReference type="Pfam" id="PF00871">
    <property type="entry name" value="Acetate_kinase"/>
    <property type="match status" value="1"/>
</dbReference>
<dbReference type="PIRSF" id="PIRSF000722">
    <property type="entry name" value="Acetate_prop_kin"/>
    <property type="match status" value="1"/>
</dbReference>
<dbReference type="PRINTS" id="PR00471">
    <property type="entry name" value="ACETATEKNASE"/>
</dbReference>
<dbReference type="SUPFAM" id="SSF53067">
    <property type="entry name" value="Actin-like ATPase domain"/>
    <property type="match status" value="2"/>
</dbReference>
<dbReference type="PROSITE" id="PS01075">
    <property type="entry name" value="ACETATE_KINASE_1"/>
    <property type="match status" value="1"/>
</dbReference>
<dbReference type="PROSITE" id="PS01076">
    <property type="entry name" value="ACETATE_KINASE_2"/>
    <property type="match status" value="1"/>
</dbReference>
<comment type="function">
    <text evidence="1">Catalyzes the formation of acetyl phosphate from acetate and ATP. Can also catalyze the reverse reaction.</text>
</comment>
<comment type="catalytic activity">
    <reaction evidence="1">
        <text>acetate + ATP = acetyl phosphate + ADP</text>
        <dbReference type="Rhea" id="RHEA:11352"/>
        <dbReference type="ChEBI" id="CHEBI:22191"/>
        <dbReference type="ChEBI" id="CHEBI:30089"/>
        <dbReference type="ChEBI" id="CHEBI:30616"/>
        <dbReference type="ChEBI" id="CHEBI:456216"/>
        <dbReference type="EC" id="2.7.2.1"/>
    </reaction>
</comment>
<comment type="cofactor">
    <cofactor evidence="1">
        <name>Mg(2+)</name>
        <dbReference type="ChEBI" id="CHEBI:18420"/>
    </cofactor>
    <cofactor evidence="1">
        <name>Mn(2+)</name>
        <dbReference type="ChEBI" id="CHEBI:29035"/>
    </cofactor>
    <text evidence="1">Mg(2+). Can also accept Mn(2+).</text>
</comment>
<comment type="pathway">
    <text evidence="1">Metabolic intermediate biosynthesis; acetyl-CoA biosynthesis; acetyl-CoA from acetate: step 1/2.</text>
</comment>
<comment type="subunit">
    <text evidence="1">Homodimer.</text>
</comment>
<comment type="subcellular location">
    <subcellularLocation>
        <location evidence="1">Cytoplasm</location>
    </subcellularLocation>
</comment>
<comment type="similarity">
    <text evidence="1">Belongs to the acetokinase family.</text>
</comment>
<evidence type="ECO:0000255" key="1">
    <source>
        <dbReference type="HAMAP-Rule" id="MF_00020"/>
    </source>
</evidence>
<gene>
    <name evidence="1" type="primary">ackA</name>
    <name type="ordered locus">SAV_2824</name>
</gene>
<keyword id="KW-0067">ATP-binding</keyword>
<keyword id="KW-0963">Cytoplasm</keyword>
<keyword id="KW-0418">Kinase</keyword>
<keyword id="KW-0460">Magnesium</keyword>
<keyword id="KW-0479">Metal-binding</keyword>
<keyword id="KW-0547">Nucleotide-binding</keyword>
<keyword id="KW-1185">Reference proteome</keyword>
<keyword id="KW-0808">Transferase</keyword>
<sequence length="405" mass="43242">MSPTRVLVLNSGSSSVKYQLLDMRDSSRLAVGLVERIGEGTSRLKHTPLTTGVSRELTSPVADHAAALKTVAEELAKDGLGLDSPELAAIGHRVVHGGRSFTEPTVIDDDVLAEIERLIPVAPLHNPANLTGIRTAMALRPDLPQVAVFDTAFHTTMPESAARYAIDVKTADEHRVRRYGFHGTSHAYVSRATAKLLGRAPKDVNLIVLHLGNGASASAVRGGRCVDTSMGLTPLEGLVMGTRSGDMDPAVIFHLMRVGGMSTDEVDTLLNTKSGLIGLCGDNDMREIRRRVDEGDEQAALAFDIYIHRLKKYIGAYYAVLGRVDAVAFTAGVGENAAPVRAAAIAGLEELGLVVDSERNAVRSDEPRIVSPEDARVAVAVVPTDEELEIAQQTYALVGTAHHLT</sequence>